<accession>B5VE90</accession>
<proteinExistence type="inferred from homology"/>
<keyword id="KW-0175">Coiled coil</keyword>
<keyword id="KW-0256">Endoplasmic reticulum</keyword>
<keyword id="KW-0472">Membrane</keyword>
<keyword id="KW-0509">mRNA transport</keyword>
<keyword id="KW-0597">Phosphoprotein</keyword>
<keyword id="KW-0694">RNA-binding</keyword>
<keyword id="KW-0813">Transport</keyword>
<protein>
    <recommendedName>
        <fullName>SWI5-dependent HO expression protein 3</fullName>
    </recommendedName>
</protein>
<feature type="chain" id="PRO_0000408939" description="SWI5-dependent HO expression protein 3">
    <location>
        <begin position="1"/>
        <end position="425"/>
    </location>
</feature>
<feature type="region of interest" description="Disordered" evidence="4">
    <location>
        <begin position="24"/>
        <end position="45"/>
    </location>
</feature>
<feature type="region of interest" description="Disordered" evidence="4">
    <location>
        <begin position="322"/>
        <end position="425"/>
    </location>
</feature>
<feature type="coiled-coil region" evidence="3">
    <location>
        <begin position="68"/>
        <end position="197"/>
    </location>
</feature>
<feature type="compositionally biased region" description="Polar residues" evidence="4">
    <location>
        <begin position="35"/>
        <end position="45"/>
    </location>
</feature>
<feature type="compositionally biased region" description="Low complexity" evidence="4">
    <location>
        <begin position="326"/>
        <end position="338"/>
    </location>
</feature>
<feature type="compositionally biased region" description="Polar residues" evidence="4">
    <location>
        <begin position="345"/>
        <end position="358"/>
    </location>
</feature>
<feature type="compositionally biased region" description="Polar residues" evidence="4">
    <location>
        <begin position="382"/>
        <end position="397"/>
    </location>
</feature>
<feature type="modified residue" description="Phosphoserine" evidence="2">
    <location>
        <position position="343"/>
    </location>
</feature>
<feature type="modified residue" description="Phosphoserine" evidence="2">
    <location>
        <position position="394"/>
    </location>
</feature>
<comment type="function">
    <text evidence="1">RNA-binding protein that binds specific mRNAs including the ASH1 mRNA, coding for a repressor of the HO endonuclease. Part of the mRNA localization machinery that restricts accumulation of certain proteins to the bud and in the daughter cell. Required for the delivery of cortical endoplasmic reticulum into the emerging bud (By similarity).</text>
</comment>
<comment type="subcellular location">
    <subcellularLocation>
        <location evidence="1">Endoplasmic reticulum membrane</location>
        <topology evidence="1">Peripheral membrane protein</topology>
    </subcellularLocation>
</comment>
<comment type="similarity">
    <text evidence="5">Belongs to the SHE3 family.</text>
</comment>
<gene>
    <name type="primary">SHE3</name>
    <name type="ORF">AWRI1631_22130</name>
</gene>
<name>SHE3_YEAS6</name>
<reference key="1">
    <citation type="journal article" date="2008" name="FEMS Yeast Res.">
        <title>Comparative genome analysis of a Saccharomyces cerevisiae wine strain.</title>
        <authorList>
            <person name="Borneman A.R."/>
            <person name="Forgan A.H."/>
            <person name="Pretorius I.S."/>
            <person name="Chambers P.J."/>
        </authorList>
    </citation>
    <scope>NUCLEOTIDE SEQUENCE [LARGE SCALE GENOMIC DNA]</scope>
    <source>
        <strain>AWRI1631</strain>
    </source>
</reference>
<sequence length="425" mass="47530">MSDQDNTQTSSSKLAPHHNIFMANLESSPTKDRNTSSQNASSSRVIESLHDQIDMLTKTNLQLTTQSQNLLSKLELAQSKESKLLENLNLLKNENENLNSIFERKNKKLKELEKDYSELSNRYNEQKEKMDQLSKLAKKSSAIEQSCSEKLQNMEVNYNSLLESQNLYRDHYSDEISKLNEKIGLLELELSNQNLNYGSDTSSNSDIELNLNKFNDSVKDLKSLETEKDSKLSKIITHSLDELNLQSWLNLYQTNENLISTFAEKMDLKDVLKRNDEKISNKGAVVQTLKKNVQTQVESNNADALSSNNAQDMLPIKMVKLRKTPNTNDSSSNGNSSNNKRRSFYTASPLLSSGSIPKSASPVLPGVKRTASVRKPSSSSSKTNVTHNNDPSTSPTISVPPGVTRTVSSTHKKKRNSMVVHGAQS</sequence>
<dbReference type="EMBL" id="ABSV01000129">
    <property type="protein sequence ID" value="EDZ73757.1"/>
    <property type="molecule type" value="Genomic_DNA"/>
</dbReference>
<dbReference type="SMR" id="B5VE90"/>
<dbReference type="OrthoDB" id="39876at4893"/>
<dbReference type="EvolutionaryTrace" id="B5VE90"/>
<dbReference type="Proteomes" id="UP000008988">
    <property type="component" value="Unassembled WGS sequence"/>
</dbReference>
<dbReference type="GO" id="GO:0005789">
    <property type="term" value="C:endoplasmic reticulum membrane"/>
    <property type="evidence" value="ECO:0007669"/>
    <property type="project" value="UniProtKB-SubCell"/>
</dbReference>
<dbReference type="GO" id="GO:0003723">
    <property type="term" value="F:RNA binding"/>
    <property type="evidence" value="ECO:0007669"/>
    <property type="project" value="UniProtKB-KW"/>
</dbReference>
<dbReference type="GO" id="GO:0048309">
    <property type="term" value="P:endoplasmic reticulum inheritance"/>
    <property type="evidence" value="ECO:0007669"/>
    <property type="project" value="InterPro"/>
</dbReference>
<dbReference type="GO" id="GO:0051028">
    <property type="term" value="P:mRNA transport"/>
    <property type="evidence" value="ECO:0007669"/>
    <property type="project" value="UniProtKB-KW"/>
</dbReference>
<dbReference type="InterPro" id="IPR031398">
    <property type="entry name" value="She3"/>
</dbReference>
<dbReference type="Pfam" id="PF17078">
    <property type="entry name" value="SHE3"/>
    <property type="match status" value="1"/>
</dbReference>
<evidence type="ECO:0000250" key="1"/>
<evidence type="ECO:0000250" key="2">
    <source>
        <dbReference type="UniProtKB" id="P38272"/>
    </source>
</evidence>
<evidence type="ECO:0000255" key="3"/>
<evidence type="ECO:0000256" key="4">
    <source>
        <dbReference type="SAM" id="MobiDB-lite"/>
    </source>
</evidence>
<evidence type="ECO:0000305" key="5"/>
<organism>
    <name type="scientific">Saccharomyces cerevisiae (strain AWRI1631)</name>
    <name type="common">Baker's yeast</name>
    <dbReference type="NCBI Taxonomy" id="545124"/>
    <lineage>
        <taxon>Eukaryota</taxon>
        <taxon>Fungi</taxon>
        <taxon>Dikarya</taxon>
        <taxon>Ascomycota</taxon>
        <taxon>Saccharomycotina</taxon>
        <taxon>Saccharomycetes</taxon>
        <taxon>Saccharomycetales</taxon>
        <taxon>Saccharomycetaceae</taxon>
        <taxon>Saccharomyces</taxon>
    </lineage>
</organism>